<gene>
    <name evidence="1" type="primary">grpE</name>
    <name type="ordered locus">PST_3328</name>
</gene>
<keyword id="KW-0143">Chaperone</keyword>
<keyword id="KW-0963">Cytoplasm</keyword>
<keyword id="KW-1185">Reference proteome</keyword>
<keyword id="KW-0346">Stress response</keyword>
<protein>
    <recommendedName>
        <fullName evidence="1">Protein GrpE</fullName>
    </recommendedName>
    <alternativeName>
        <fullName evidence="1">HSP-70 cofactor</fullName>
    </alternativeName>
</protein>
<organism>
    <name type="scientific">Stutzerimonas stutzeri (strain A1501)</name>
    <name type="common">Pseudomonas stutzeri</name>
    <dbReference type="NCBI Taxonomy" id="379731"/>
    <lineage>
        <taxon>Bacteria</taxon>
        <taxon>Pseudomonadati</taxon>
        <taxon>Pseudomonadota</taxon>
        <taxon>Gammaproteobacteria</taxon>
        <taxon>Pseudomonadales</taxon>
        <taxon>Pseudomonadaceae</taxon>
        <taxon>Stutzerimonas</taxon>
    </lineage>
</organism>
<dbReference type="EMBL" id="CP000304">
    <property type="protein sequence ID" value="ABP80957.1"/>
    <property type="molecule type" value="Genomic_DNA"/>
</dbReference>
<dbReference type="RefSeq" id="WP_011914388.1">
    <property type="nucleotide sequence ID" value="NC_009434.1"/>
</dbReference>
<dbReference type="SMR" id="A4VPQ6"/>
<dbReference type="GeneID" id="66822725"/>
<dbReference type="KEGG" id="psa:PST_3328"/>
<dbReference type="eggNOG" id="COG0576">
    <property type="taxonomic scope" value="Bacteria"/>
</dbReference>
<dbReference type="HOGENOM" id="CLU_057217_6_0_6"/>
<dbReference type="Proteomes" id="UP000000233">
    <property type="component" value="Chromosome"/>
</dbReference>
<dbReference type="GO" id="GO:0005829">
    <property type="term" value="C:cytosol"/>
    <property type="evidence" value="ECO:0007669"/>
    <property type="project" value="TreeGrafter"/>
</dbReference>
<dbReference type="GO" id="GO:0000774">
    <property type="term" value="F:adenyl-nucleotide exchange factor activity"/>
    <property type="evidence" value="ECO:0007669"/>
    <property type="project" value="InterPro"/>
</dbReference>
<dbReference type="GO" id="GO:0042803">
    <property type="term" value="F:protein homodimerization activity"/>
    <property type="evidence" value="ECO:0007669"/>
    <property type="project" value="InterPro"/>
</dbReference>
<dbReference type="GO" id="GO:0051087">
    <property type="term" value="F:protein-folding chaperone binding"/>
    <property type="evidence" value="ECO:0007669"/>
    <property type="project" value="InterPro"/>
</dbReference>
<dbReference type="GO" id="GO:0051082">
    <property type="term" value="F:unfolded protein binding"/>
    <property type="evidence" value="ECO:0007669"/>
    <property type="project" value="TreeGrafter"/>
</dbReference>
<dbReference type="GO" id="GO:0006457">
    <property type="term" value="P:protein folding"/>
    <property type="evidence" value="ECO:0007669"/>
    <property type="project" value="InterPro"/>
</dbReference>
<dbReference type="CDD" id="cd00446">
    <property type="entry name" value="GrpE"/>
    <property type="match status" value="1"/>
</dbReference>
<dbReference type="FunFam" id="2.30.22.10:FF:000001">
    <property type="entry name" value="Protein GrpE"/>
    <property type="match status" value="1"/>
</dbReference>
<dbReference type="Gene3D" id="3.90.20.20">
    <property type="match status" value="1"/>
</dbReference>
<dbReference type="Gene3D" id="2.30.22.10">
    <property type="entry name" value="Head domain of nucleotide exchange factor GrpE"/>
    <property type="match status" value="1"/>
</dbReference>
<dbReference type="HAMAP" id="MF_01151">
    <property type="entry name" value="GrpE"/>
    <property type="match status" value="1"/>
</dbReference>
<dbReference type="InterPro" id="IPR000740">
    <property type="entry name" value="GrpE"/>
</dbReference>
<dbReference type="InterPro" id="IPR013805">
    <property type="entry name" value="GrpE_coiled_coil"/>
</dbReference>
<dbReference type="InterPro" id="IPR009012">
    <property type="entry name" value="GrpE_head"/>
</dbReference>
<dbReference type="NCBIfam" id="NF010737">
    <property type="entry name" value="PRK14139.1"/>
    <property type="match status" value="1"/>
</dbReference>
<dbReference type="NCBIfam" id="NF010738">
    <property type="entry name" value="PRK14140.1"/>
    <property type="match status" value="1"/>
</dbReference>
<dbReference type="NCBIfam" id="NF010748">
    <property type="entry name" value="PRK14150.1"/>
    <property type="match status" value="1"/>
</dbReference>
<dbReference type="NCBIfam" id="NF010749">
    <property type="entry name" value="PRK14151.1"/>
    <property type="match status" value="1"/>
</dbReference>
<dbReference type="PANTHER" id="PTHR21237">
    <property type="entry name" value="GRPE PROTEIN"/>
    <property type="match status" value="1"/>
</dbReference>
<dbReference type="PANTHER" id="PTHR21237:SF23">
    <property type="entry name" value="GRPE PROTEIN HOMOLOG, MITOCHONDRIAL"/>
    <property type="match status" value="1"/>
</dbReference>
<dbReference type="Pfam" id="PF01025">
    <property type="entry name" value="GrpE"/>
    <property type="match status" value="1"/>
</dbReference>
<dbReference type="PRINTS" id="PR00773">
    <property type="entry name" value="GRPEPROTEIN"/>
</dbReference>
<dbReference type="SUPFAM" id="SSF58014">
    <property type="entry name" value="Coiled-coil domain of nucleotide exchange factor GrpE"/>
    <property type="match status" value="1"/>
</dbReference>
<dbReference type="SUPFAM" id="SSF51064">
    <property type="entry name" value="Head domain of nucleotide exchange factor GrpE"/>
    <property type="match status" value="1"/>
</dbReference>
<dbReference type="PROSITE" id="PS01071">
    <property type="entry name" value="GRPE"/>
    <property type="match status" value="1"/>
</dbReference>
<proteinExistence type="inferred from homology"/>
<name>GRPE_STUS1</name>
<reference key="1">
    <citation type="journal article" date="2008" name="Proc. Natl. Acad. Sci. U.S.A.">
        <title>Nitrogen fixation island and rhizosphere competence traits in the genome of root-associated Pseudomonas stutzeri A1501.</title>
        <authorList>
            <person name="Yan Y."/>
            <person name="Yang J."/>
            <person name="Dou Y."/>
            <person name="Chen M."/>
            <person name="Ping S."/>
            <person name="Peng J."/>
            <person name="Lu W."/>
            <person name="Zhang W."/>
            <person name="Yao Z."/>
            <person name="Li H."/>
            <person name="Liu W."/>
            <person name="He S."/>
            <person name="Geng L."/>
            <person name="Zhang X."/>
            <person name="Yang F."/>
            <person name="Yu H."/>
            <person name="Zhan Y."/>
            <person name="Li D."/>
            <person name="Lin Z."/>
            <person name="Wang Y."/>
            <person name="Elmerich C."/>
            <person name="Lin M."/>
            <person name="Jin Q."/>
        </authorList>
    </citation>
    <scope>NUCLEOTIDE SEQUENCE [LARGE SCALE GENOMIC DNA]</scope>
    <source>
        <strain>A1501</strain>
    </source>
</reference>
<feature type="chain" id="PRO_1000053628" description="Protein GrpE">
    <location>
        <begin position="1"/>
        <end position="189"/>
    </location>
</feature>
<feature type="region of interest" description="Disordered" evidence="2">
    <location>
        <begin position="1"/>
        <end position="21"/>
    </location>
</feature>
<feature type="compositionally biased region" description="Polar residues" evidence="2">
    <location>
        <begin position="7"/>
        <end position="20"/>
    </location>
</feature>
<evidence type="ECO:0000255" key="1">
    <source>
        <dbReference type="HAMAP-Rule" id="MF_01151"/>
    </source>
</evidence>
<evidence type="ECO:0000256" key="2">
    <source>
        <dbReference type="SAM" id="MobiDB-lite"/>
    </source>
</evidence>
<accession>A4VPQ6</accession>
<sequence length="189" mass="20882">MADEQNLDNQNPETPEQSQADVAEDLAARVQSLEEQLAAAQDQSLRVAAELQNIRRRAEQDVEKAHKFALEKFAGDLLAVADSLERGLELSNPDDEAVKPMREGVELTLKLLLDTLARHQLEQLDPHGEPFNPEHHQAMAMEESTHVEPGSVLKVFQKGYLLNGRLLRPAMVVVSKAPADAPPSIDEKA</sequence>
<comment type="function">
    <text evidence="1">Participates actively in the response to hyperosmotic and heat shock by preventing the aggregation of stress-denatured proteins, in association with DnaK and GrpE. It is the nucleotide exchange factor for DnaK and may function as a thermosensor. Unfolded proteins bind initially to DnaJ; upon interaction with the DnaJ-bound protein, DnaK hydrolyzes its bound ATP, resulting in the formation of a stable complex. GrpE releases ADP from DnaK; ATP binding to DnaK triggers the release of the substrate protein, thus completing the reaction cycle. Several rounds of ATP-dependent interactions between DnaJ, DnaK and GrpE are required for fully efficient folding.</text>
</comment>
<comment type="subunit">
    <text evidence="1">Homodimer.</text>
</comment>
<comment type="subcellular location">
    <subcellularLocation>
        <location evidence="1">Cytoplasm</location>
    </subcellularLocation>
</comment>
<comment type="similarity">
    <text evidence="1">Belongs to the GrpE family.</text>
</comment>